<keyword id="KW-0030">Aminoacyl-tRNA synthetase</keyword>
<keyword id="KW-0067">ATP-binding</keyword>
<keyword id="KW-0963">Cytoplasm</keyword>
<keyword id="KW-0436">Ligase</keyword>
<keyword id="KW-0547">Nucleotide-binding</keyword>
<keyword id="KW-0648">Protein biosynthesis</keyword>
<comment type="catalytic activity">
    <reaction>
        <text>tRNA(His) + L-histidine + ATP = L-histidyl-tRNA(His) + AMP + diphosphate + H(+)</text>
        <dbReference type="Rhea" id="RHEA:17313"/>
        <dbReference type="Rhea" id="RHEA-COMP:9665"/>
        <dbReference type="Rhea" id="RHEA-COMP:9689"/>
        <dbReference type="ChEBI" id="CHEBI:15378"/>
        <dbReference type="ChEBI" id="CHEBI:30616"/>
        <dbReference type="ChEBI" id="CHEBI:33019"/>
        <dbReference type="ChEBI" id="CHEBI:57595"/>
        <dbReference type="ChEBI" id="CHEBI:78442"/>
        <dbReference type="ChEBI" id="CHEBI:78527"/>
        <dbReference type="ChEBI" id="CHEBI:456215"/>
        <dbReference type="EC" id="6.1.1.21"/>
    </reaction>
</comment>
<comment type="subunit">
    <text evidence="1">Homodimer.</text>
</comment>
<comment type="subcellular location">
    <subcellularLocation>
        <location evidence="1">Cytoplasm</location>
    </subcellularLocation>
</comment>
<comment type="similarity">
    <text evidence="3">Belongs to the class-II aminoacyl-tRNA synthetase family.</text>
</comment>
<accession>Q6A8J7</accession>
<organism>
    <name type="scientific">Cutibacterium acnes (strain DSM 16379 / KPA171202)</name>
    <name type="common">Propionibacterium acnes</name>
    <dbReference type="NCBI Taxonomy" id="267747"/>
    <lineage>
        <taxon>Bacteria</taxon>
        <taxon>Bacillati</taxon>
        <taxon>Actinomycetota</taxon>
        <taxon>Actinomycetes</taxon>
        <taxon>Propionibacteriales</taxon>
        <taxon>Propionibacteriaceae</taxon>
        <taxon>Cutibacterium</taxon>
    </lineage>
</organism>
<protein>
    <recommendedName>
        <fullName>Histidine--tRNA ligase</fullName>
        <ecNumber>6.1.1.21</ecNumber>
    </recommendedName>
    <alternativeName>
        <fullName>Histidyl-tRNA synthetase</fullName>
        <shortName>HisRS</shortName>
    </alternativeName>
</protein>
<proteinExistence type="inferred from homology"/>
<gene>
    <name type="primary">hisS</name>
    <name type="ordered locus">PPA1169</name>
</gene>
<sequence length="454" mass="50276">MARLKPLSGFPEFLPSGQMVENHVTRILEETFELHGFAPIRTRAVEPMEQLTRKGEIDKEVYVVDRLHADPHDTRSGKDRLGLHFDLTVPFARYVLENAGHLYFPFRRYQIQKVWRGERPQEGRYREFTQADIDIVGDQTLAEHHDVETPLVMLSALERLHTELGFPTVTMHVNNRKLSEGFYRGLGIADPMAVLQRVDKYDKIGPDAVRKLLVDELNLSDDAAAKCVALASIQSTDDSFIAKVRELGVANDMLEEGLDSLNRVVAAVNKAVPGRMVANLKIARGLDYYTGTVYETELTGHESMGSVCSGGRYESLASDGKHVYPGVGISLGLTRLLAPILSRGELSSSRSVPSAVLVAVNTEEDRATSEVIASALRSRGIPCEVAPKADKFGKQIKHADRRGIPFVWFPGVKHADYRDADTVKDIRSGDQVEADAGAWNPPTEDLHPGVIGTW</sequence>
<evidence type="ECO:0000250" key="1"/>
<evidence type="ECO:0000256" key="2">
    <source>
        <dbReference type="SAM" id="MobiDB-lite"/>
    </source>
</evidence>
<evidence type="ECO:0000305" key="3"/>
<feature type="chain" id="PRO_0000136224" description="Histidine--tRNA ligase">
    <location>
        <begin position="1"/>
        <end position="454"/>
    </location>
</feature>
<feature type="region of interest" description="Disordered" evidence="2">
    <location>
        <begin position="434"/>
        <end position="454"/>
    </location>
</feature>
<reference key="1">
    <citation type="journal article" date="2004" name="Science">
        <title>The complete genome sequence of Propionibacterium acnes, a commensal of human skin.</title>
        <authorList>
            <person name="Brueggemann H."/>
            <person name="Henne A."/>
            <person name="Hoster F."/>
            <person name="Liesegang H."/>
            <person name="Wiezer A."/>
            <person name="Strittmatter A."/>
            <person name="Hujer S."/>
            <person name="Duerre P."/>
            <person name="Gottschalk G."/>
        </authorList>
    </citation>
    <scope>NUCLEOTIDE SEQUENCE [LARGE SCALE GENOMIC DNA]</scope>
    <source>
        <strain>DSM 16379 / KPA171202</strain>
    </source>
</reference>
<name>SYH_CUTAK</name>
<dbReference type="EC" id="6.1.1.21"/>
<dbReference type="EMBL" id="AE017283">
    <property type="protein sequence ID" value="AAT82918.1"/>
    <property type="molecule type" value="Genomic_DNA"/>
</dbReference>
<dbReference type="RefSeq" id="WP_002517998.1">
    <property type="nucleotide sequence ID" value="NZ_CP025935.1"/>
</dbReference>
<dbReference type="SMR" id="Q6A8J7"/>
<dbReference type="EnsemblBacteria" id="AAT82918">
    <property type="protein sequence ID" value="AAT82918"/>
    <property type="gene ID" value="PPA1169"/>
</dbReference>
<dbReference type="KEGG" id="pac:PPA1169"/>
<dbReference type="PATRIC" id="fig|267747.3.peg.1205"/>
<dbReference type="eggNOG" id="COG0124">
    <property type="taxonomic scope" value="Bacteria"/>
</dbReference>
<dbReference type="HOGENOM" id="CLU_025113_3_0_11"/>
<dbReference type="Proteomes" id="UP000000603">
    <property type="component" value="Chromosome"/>
</dbReference>
<dbReference type="GO" id="GO:0005737">
    <property type="term" value="C:cytoplasm"/>
    <property type="evidence" value="ECO:0007669"/>
    <property type="project" value="UniProtKB-SubCell"/>
</dbReference>
<dbReference type="GO" id="GO:0005524">
    <property type="term" value="F:ATP binding"/>
    <property type="evidence" value="ECO:0007669"/>
    <property type="project" value="UniProtKB-KW"/>
</dbReference>
<dbReference type="GO" id="GO:0004821">
    <property type="term" value="F:histidine-tRNA ligase activity"/>
    <property type="evidence" value="ECO:0007669"/>
    <property type="project" value="UniProtKB-EC"/>
</dbReference>
<dbReference type="GO" id="GO:0006427">
    <property type="term" value="P:histidyl-tRNA aminoacylation"/>
    <property type="evidence" value="ECO:0007669"/>
    <property type="project" value="InterPro"/>
</dbReference>
<dbReference type="CDD" id="cd00773">
    <property type="entry name" value="HisRS-like_core"/>
    <property type="match status" value="1"/>
</dbReference>
<dbReference type="Gene3D" id="3.40.50.800">
    <property type="entry name" value="Anticodon-binding domain"/>
    <property type="match status" value="1"/>
</dbReference>
<dbReference type="Gene3D" id="3.30.930.10">
    <property type="entry name" value="Bira Bifunctional Protein, Domain 2"/>
    <property type="match status" value="1"/>
</dbReference>
<dbReference type="InterPro" id="IPR006195">
    <property type="entry name" value="aa-tRNA-synth_II"/>
</dbReference>
<dbReference type="InterPro" id="IPR045864">
    <property type="entry name" value="aa-tRNA-synth_II/BPL/LPL"/>
</dbReference>
<dbReference type="InterPro" id="IPR004154">
    <property type="entry name" value="Anticodon-bd"/>
</dbReference>
<dbReference type="InterPro" id="IPR036621">
    <property type="entry name" value="Anticodon-bd_dom_sf"/>
</dbReference>
<dbReference type="InterPro" id="IPR015807">
    <property type="entry name" value="His-tRNA-ligase"/>
</dbReference>
<dbReference type="InterPro" id="IPR041715">
    <property type="entry name" value="HisRS-like_core"/>
</dbReference>
<dbReference type="InterPro" id="IPR004516">
    <property type="entry name" value="HisRS/HisZ"/>
</dbReference>
<dbReference type="NCBIfam" id="TIGR00442">
    <property type="entry name" value="hisS"/>
    <property type="match status" value="1"/>
</dbReference>
<dbReference type="PANTHER" id="PTHR11476:SF7">
    <property type="entry name" value="HISTIDINE--TRNA LIGASE"/>
    <property type="match status" value="1"/>
</dbReference>
<dbReference type="PANTHER" id="PTHR11476">
    <property type="entry name" value="HISTIDYL-TRNA SYNTHETASE"/>
    <property type="match status" value="1"/>
</dbReference>
<dbReference type="Pfam" id="PF03129">
    <property type="entry name" value="HGTP_anticodon"/>
    <property type="match status" value="1"/>
</dbReference>
<dbReference type="Pfam" id="PF13393">
    <property type="entry name" value="tRNA-synt_His"/>
    <property type="match status" value="1"/>
</dbReference>
<dbReference type="PIRSF" id="PIRSF001549">
    <property type="entry name" value="His-tRNA_synth"/>
    <property type="match status" value="1"/>
</dbReference>
<dbReference type="SUPFAM" id="SSF52954">
    <property type="entry name" value="Class II aaRS ABD-related"/>
    <property type="match status" value="1"/>
</dbReference>
<dbReference type="SUPFAM" id="SSF55681">
    <property type="entry name" value="Class II aaRS and biotin synthetases"/>
    <property type="match status" value="1"/>
</dbReference>
<dbReference type="PROSITE" id="PS50862">
    <property type="entry name" value="AA_TRNA_LIGASE_II"/>
    <property type="match status" value="1"/>
</dbReference>